<proteinExistence type="inferred from homology"/>
<comment type="function">
    <text evidence="1">Catalyzes the transfer of the enolpyruvyl moiety of phosphoenolpyruvate (PEP) to the 5-hydroxyl of shikimate-3-phosphate (S3P) to produce enolpyruvyl shikimate-3-phosphate and inorganic phosphate.</text>
</comment>
<comment type="catalytic activity">
    <reaction evidence="1">
        <text>3-phosphoshikimate + phosphoenolpyruvate = 5-O-(1-carboxyvinyl)-3-phosphoshikimate + phosphate</text>
        <dbReference type="Rhea" id="RHEA:21256"/>
        <dbReference type="ChEBI" id="CHEBI:43474"/>
        <dbReference type="ChEBI" id="CHEBI:57701"/>
        <dbReference type="ChEBI" id="CHEBI:58702"/>
        <dbReference type="ChEBI" id="CHEBI:145989"/>
        <dbReference type="EC" id="2.5.1.19"/>
    </reaction>
    <physiologicalReaction direction="left-to-right" evidence="1">
        <dbReference type="Rhea" id="RHEA:21257"/>
    </physiologicalReaction>
</comment>
<comment type="pathway">
    <text evidence="1">Metabolic intermediate biosynthesis; chorismate biosynthesis; chorismate from D-erythrose 4-phosphate and phosphoenolpyruvate: step 6/7.</text>
</comment>
<comment type="subunit">
    <text evidence="1">Monomer.</text>
</comment>
<comment type="subcellular location">
    <subcellularLocation>
        <location evidence="1">Cytoplasm</location>
    </subcellularLocation>
</comment>
<comment type="similarity">
    <text evidence="1">Belongs to the EPSP synthase family.</text>
</comment>
<gene>
    <name evidence="1" type="primary">aroA</name>
    <name type="ordered locus">gll1038</name>
</gene>
<evidence type="ECO:0000255" key="1">
    <source>
        <dbReference type="HAMAP-Rule" id="MF_00210"/>
    </source>
</evidence>
<feature type="chain" id="PRO_1000012436" description="3-phosphoshikimate 1-carboxyvinyltransferase">
    <location>
        <begin position="1"/>
        <end position="432"/>
    </location>
</feature>
<feature type="active site" description="Proton acceptor" evidence="1">
    <location>
        <position position="318"/>
    </location>
</feature>
<feature type="binding site" evidence="1">
    <location>
        <position position="23"/>
    </location>
    <ligand>
        <name>3-phosphoshikimate</name>
        <dbReference type="ChEBI" id="CHEBI:145989"/>
    </ligand>
</feature>
<feature type="binding site" evidence="1">
    <location>
        <position position="23"/>
    </location>
    <ligand>
        <name>phosphoenolpyruvate</name>
        <dbReference type="ChEBI" id="CHEBI:58702"/>
    </ligand>
</feature>
<feature type="binding site" evidence="1">
    <location>
        <position position="24"/>
    </location>
    <ligand>
        <name>3-phosphoshikimate</name>
        <dbReference type="ChEBI" id="CHEBI:145989"/>
    </ligand>
</feature>
<feature type="binding site" evidence="1">
    <location>
        <position position="28"/>
    </location>
    <ligand>
        <name>3-phosphoshikimate</name>
        <dbReference type="ChEBI" id="CHEBI:145989"/>
    </ligand>
</feature>
<feature type="binding site" evidence="1">
    <location>
        <position position="96"/>
    </location>
    <ligand>
        <name>phosphoenolpyruvate</name>
        <dbReference type="ChEBI" id="CHEBI:58702"/>
    </ligand>
</feature>
<feature type="binding site" evidence="1">
    <location>
        <position position="125"/>
    </location>
    <ligand>
        <name>phosphoenolpyruvate</name>
        <dbReference type="ChEBI" id="CHEBI:58702"/>
    </ligand>
</feature>
<feature type="binding site" evidence="1">
    <location>
        <position position="170"/>
    </location>
    <ligand>
        <name>3-phosphoshikimate</name>
        <dbReference type="ChEBI" id="CHEBI:145989"/>
    </ligand>
</feature>
<feature type="binding site" evidence="1">
    <location>
        <position position="172"/>
    </location>
    <ligand>
        <name>3-phosphoshikimate</name>
        <dbReference type="ChEBI" id="CHEBI:145989"/>
    </ligand>
</feature>
<feature type="binding site" evidence="1">
    <location>
        <position position="172"/>
    </location>
    <ligand>
        <name>phosphoenolpyruvate</name>
        <dbReference type="ChEBI" id="CHEBI:58702"/>
    </ligand>
</feature>
<feature type="binding site" evidence="1">
    <location>
        <position position="318"/>
    </location>
    <ligand>
        <name>3-phosphoshikimate</name>
        <dbReference type="ChEBI" id="CHEBI:145989"/>
    </ligand>
</feature>
<feature type="binding site" evidence="1">
    <location>
        <position position="345"/>
    </location>
    <ligand>
        <name>3-phosphoshikimate</name>
        <dbReference type="ChEBI" id="CHEBI:145989"/>
    </ligand>
</feature>
<feature type="binding site" evidence="1">
    <location>
        <position position="349"/>
    </location>
    <ligand>
        <name>phosphoenolpyruvate</name>
        <dbReference type="ChEBI" id="CHEBI:58702"/>
    </ligand>
</feature>
<feature type="binding site" evidence="1">
    <location>
        <position position="391"/>
    </location>
    <ligand>
        <name>phosphoenolpyruvate</name>
        <dbReference type="ChEBI" id="CHEBI:58702"/>
    </ligand>
</feature>
<sequence>MGQAFSITPARRLSGEIAVAGDKSISHRALMLAALAEGESVIEGLLPGDDPRSTAACLRALGAEISGIDGPSVRVRGVGLGRLHEPADVLDMGNSGTTMRLMLGVLAGQPGLFCTLTGDRSLRSRPMLRVVSPLRQMGARIWGREEGGRAPLAVWGEQLRAIDFVSPVASAQVKSAVLLAGLLAEGLTSVSEPVRSRDHSERMLRAFGAEVLVDGTTAAVRGPARLRAQSLRVPGDISSAAFWLVAGSIVPDSQLLLSGVGVNPTRTGVLDALAAMGADIAVENRREVCGEPVADLRVRSAPLKACTIGGEWIPRLVDEIPVLAVAACCAAGKTVIRDAAELRVKESDRLATMARELGRLGAHIEERPDGLVIEGGHRLVGAGVESHDDHRVAMSLAVAGLVATGTTEIADPDCATVSYPQFYEHLARVRQQ</sequence>
<dbReference type="EC" id="2.5.1.19" evidence="1"/>
<dbReference type="EMBL" id="BA000045">
    <property type="protein sequence ID" value="BAC88979.1"/>
    <property type="molecule type" value="Genomic_DNA"/>
</dbReference>
<dbReference type="RefSeq" id="NP_923984.1">
    <property type="nucleotide sequence ID" value="NC_005125.1"/>
</dbReference>
<dbReference type="RefSeq" id="WP_011141040.1">
    <property type="nucleotide sequence ID" value="NC_005125.1"/>
</dbReference>
<dbReference type="SMR" id="Q7NLT3"/>
<dbReference type="FunCoup" id="Q7NLT3">
    <property type="interactions" value="210"/>
</dbReference>
<dbReference type="STRING" id="251221.gene:10758516"/>
<dbReference type="EnsemblBacteria" id="BAC88979">
    <property type="protein sequence ID" value="BAC88979"/>
    <property type="gene ID" value="BAC88979"/>
</dbReference>
<dbReference type="KEGG" id="gvi:gll1038"/>
<dbReference type="PATRIC" id="fig|251221.4.peg.1063"/>
<dbReference type="eggNOG" id="COG0128">
    <property type="taxonomic scope" value="Bacteria"/>
</dbReference>
<dbReference type="HOGENOM" id="CLU_024321_0_1_3"/>
<dbReference type="InParanoid" id="Q7NLT3"/>
<dbReference type="OrthoDB" id="9809920at2"/>
<dbReference type="PhylomeDB" id="Q7NLT3"/>
<dbReference type="UniPathway" id="UPA00053">
    <property type="reaction ID" value="UER00089"/>
</dbReference>
<dbReference type="Proteomes" id="UP000000557">
    <property type="component" value="Chromosome"/>
</dbReference>
<dbReference type="GO" id="GO:0005737">
    <property type="term" value="C:cytoplasm"/>
    <property type="evidence" value="ECO:0007669"/>
    <property type="project" value="UniProtKB-SubCell"/>
</dbReference>
<dbReference type="GO" id="GO:0003866">
    <property type="term" value="F:3-phosphoshikimate 1-carboxyvinyltransferase activity"/>
    <property type="evidence" value="ECO:0000318"/>
    <property type="project" value="GO_Central"/>
</dbReference>
<dbReference type="GO" id="GO:0008652">
    <property type="term" value="P:amino acid biosynthetic process"/>
    <property type="evidence" value="ECO:0007669"/>
    <property type="project" value="UniProtKB-KW"/>
</dbReference>
<dbReference type="GO" id="GO:0009073">
    <property type="term" value="P:aromatic amino acid family biosynthetic process"/>
    <property type="evidence" value="ECO:0007669"/>
    <property type="project" value="UniProtKB-KW"/>
</dbReference>
<dbReference type="GO" id="GO:0009423">
    <property type="term" value="P:chorismate biosynthetic process"/>
    <property type="evidence" value="ECO:0000318"/>
    <property type="project" value="GO_Central"/>
</dbReference>
<dbReference type="CDD" id="cd01556">
    <property type="entry name" value="EPSP_synthase"/>
    <property type="match status" value="1"/>
</dbReference>
<dbReference type="FunFam" id="3.65.10.10:FF:000005">
    <property type="entry name" value="3-phosphoshikimate 1-carboxyvinyltransferase"/>
    <property type="match status" value="1"/>
</dbReference>
<dbReference type="FunFam" id="3.65.10.10:FF:000006">
    <property type="entry name" value="3-phosphoshikimate 1-carboxyvinyltransferase"/>
    <property type="match status" value="1"/>
</dbReference>
<dbReference type="Gene3D" id="3.65.10.10">
    <property type="entry name" value="Enolpyruvate transferase domain"/>
    <property type="match status" value="2"/>
</dbReference>
<dbReference type="HAMAP" id="MF_00210">
    <property type="entry name" value="EPSP_synth"/>
    <property type="match status" value="1"/>
</dbReference>
<dbReference type="InterPro" id="IPR001986">
    <property type="entry name" value="Enolpyruvate_Tfrase_dom"/>
</dbReference>
<dbReference type="InterPro" id="IPR036968">
    <property type="entry name" value="Enolpyruvate_Tfrase_sf"/>
</dbReference>
<dbReference type="InterPro" id="IPR006264">
    <property type="entry name" value="EPSP_synthase"/>
</dbReference>
<dbReference type="InterPro" id="IPR023193">
    <property type="entry name" value="EPSP_synthase_CS"/>
</dbReference>
<dbReference type="InterPro" id="IPR013792">
    <property type="entry name" value="RNA3'P_cycl/enolpyr_Trfase_a/b"/>
</dbReference>
<dbReference type="NCBIfam" id="TIGR01356">
    <property type="entry name" value="aroA"/>
    <property type="match status" value="1"/>
</dbReference>
<dbReference type="PANTHER" id="PTHR21090">
    <property type="entry name" value="AROM/DEHYDROQUINATE SYNTHASE"/>
    <property type="match status" value="1"/>
</dbReference>
<dbReference type="PANTHER" id="PTHR21090:SF5">
    <property type="entry name" value="PENTAFUNCTIONAL AROM POLYPEPTIDE"/>
    <property type="match status" value="1"/>
</dbReference>
<dbReference type="Pfam" id="PF00275">
    <property type="entry name" value="EPSP_synthase"/>
    <property type="match status" value="1"/>
</dbReference>
<dbReference type="PIRSF" id="PIRSF000505">
    <property type="entry name" value="EPSPS"/>
    <property type="match status" value="1"/>
</dbReference>
<dbReference type="SUPFAM" id="SSF55205">
    <property type="entry name" value="EPT/RTPC-like"/>
    <property type="match status" value="1"/>
</dbReference>
<dbReference type="PROSITE" id="PS00104">
    <property type="entry name" value="EPSP_SYNTHASE_1"/>
    <property type="match status" value="1"/>
</dbReference>
<dbReference type="PROSITE" id="PS00885">
    <property type="entry name" value="EPSP_SYNTHASE_2"/>
    <property type="match status" value="1"/>
</dbReference>
<organism>
    <name type="scientific">Gloeobacter violaceus (strain ATCC 29082 / PCC 7421)</name>
    <dbReference type="NCBI Taxonomy" id="251221"/>
    <lineage>
        <taxon>Bacteria</taxon>
        <taxon>Bacillati</taxon>
        <taxon>Cyanobacteriota</taxon>
        <taxon>Cyanophyceae</taxon>
        <taxon>Gloeobacterales</taxon>
        <taxon>Gloeobacteraceae</taxon>
        <taxon>Gloeobacter</taxon>
    </lineage>
</organism>
<name>AROA_GLOVI</name>
<reference key="1">
    <citation type="journal article" date="2003" name="DNA Res.">
        <title>Complete genome structure of Gloeobacter violaceus PCC 7421, a cyanobacterium that lacks thylakoids.</title>
        <authorList>
            <person name="Nakamura Y."/>
            <person name="Kaneko T."/>
            <person name="Sato S."/>
            <person name="Mimuro M."/>
            <person name="Miyashita H."/>
            <person name="Tsuchiya T."/>
            <person name="Sasamoto S."/>
            <person name="Watanabe A."/>
            <person name="Kawashima K."/>
            <person name="Kishida Y."/>
            <person name="Kiyokawa C."/>
            <person name="Kohara M."/>
            <person name="Matsumoto M."/>
            <person name="Matsuno A."/>
            <person name="Nakazaki N."/>
            <person name="Shimpo S."/>
            <person name="Takeuchi C."/>
            <person name="Yamada M."/>
            <person name="Tabata S."/>
        </authorList>
    </citation>
    <scope>NUCLEOTIDE SEQUENCE [LARGE SCALE GENOMIC DNA]</scope>
    <source>
        <strain>ATCC 29082 / PCC 7421</strain>
    </source>
</reference>
<protein>
    <recommendedName>
        <fullName evidence="1">3-phosphoshikimate 1-carboxyvinyltransferase</fullName>
        <ecNumber evidence="1">2.5.1.19</ecNumber>
    </recommendedName>
    <alternativeName>
        <fullName evidence="1">5-enolpyruvylshikimate-3-phosphate synthase</fullName>
        <shortName evidence="1">EPSP synthase</shortName>
        <shortName evidence="1">EPSPS</shortName>
    </alternativeName>
</protein>
<keyword id="KW-0028">Amino-acid biosynthesis</keyword>
<keyword id="KW-0057">Aromatic amino acid biosynthesis</keyword>
<keyword id="KW-0963">Cytoplasm</keyword>
<keyword id="KW-1185">Reference proteome</keyword>
<keyword id="KW-0808">Transferase</keyword>
<accession>Q7NLT3</accession>